<evidence type="ECO:0000255" key="1">
    <source>
        <dbReference type="HAMAP-Rule" id="MF_00003"/>
    </source>
</evidence>
<comment type="function">
    <text evidence="1">One of several proteins that assist in the late maturation steps of the functional core of the 30S ribosomal subunit. Associates with free 30S ribosomal subunits (but not with 30S subunits that are part of 70S ribosomes or polysomes). Required for efficient processing of 16S rRNA. May interact with the 5'-terminal helix region of 16S rRNA.</text>
</comment>
<comment type="subunit">
    <text evidence="1">Monomer. Binds 30S ribosomal subunits, but not 50S ribosomal subunits or 70S ribosomes.</text>
</comment>
<comment type="subcellular location">
    <subcellularLocation>
        <location evidence="1">Cytoplasm</location>
    </subcellularLocation>
</comment>
<comment type="similarity">
    <text evidence="1">Belongs to the RbfA family.</text>
</comment>
<feature type="chain" id="PRO_1000088874" description="Ribosome-binding factor A">
    <location>
        <begin position="1"/>
        <end position="116"/>
    </location>
</feature>
<proteinExistence type="inferred from homology"/>
<accession>B2V4H0</accession>
<dbReference type="EMBL" id="CP001078">
    <property type="protein sequence ID" value="ACD51355.1"/>
    <property type="molecule type" value="Genomic_DNA"/>
</dbReference>
<dbReference type="RefSeq" id="WP_003374634.1">
    <property type="nucleotide sequence ID" value="NC_010723.1"/>
</dbReference>
<dbReference type="SMR" id="B2V4H0"/>
<dbReference type="KEGG" id="cbt:CLH_1225"/>
<dbReference type="HOGENOM" id="CLU_089475_6_3_9"/>
<dbReference type="GO" id="GO:0005829">
    <property type="term" value="C:cytosol"/>
    <property type="evidence" value="ECO:0007669"/>
    <property type="project" value="TreeGrafter"/>
</dbReference>
<dbReference type="GO" id="GO:0043024">
    <property type="term" value="F:ribosomal small subunit binding"/>
    <property type="evidence" value="ECO:0007669"/>
    <property type="project" value="TreeGrafter"/>
</dbReference>
<dbReference type="GO" id="GO:0030490">
    <property type="term" value="P:maturation of SSU-rRNA"/>
    <property type="evidence" value="ECO:0007669"/>
    <property type="project" value="UniProtKB-UniRule"/>
</dbReference>
<dbReference type="Gene3D" id="3.30.300.20">
    <property type="match status" value="1"/>
</dbReference>
<dbReference type="HAMAP" id="MF_00003">
    <property type="entry name" value="RbfA"/>
    <property type="match status" value="1"/>
</dbReference>
<dbReference type="InterPro" id="IPR015946">
    <property type="entry name" value="KH_dom-like_a/b"/>
</dbReference>
<dbReference type="InterPro" id="IPR000238">
    <property type="entry name" value="RbfA"/>
</dbReference>
<dbReference type="InterPro" id="IPR023799">
    <property type="entry name" value="RbfA_dom_sf"/>
</dbReference>
<dbReference type="NCBIfam" id="TIGR00082">
    <property type="entry name" value="rbfA"/>
    <property type="match status" value="1"/>
</dbReference>
<dbReference type="PANTHER" id="PTHR33515">
    <property type="entry name" value="RIBOSOME-BINDING FACTOR A, CHLOROPLASTIC-RELATED"/>
    <property type="match status" value="1"/>
</dbReference>
<dbReference type="PANTHER" id="PTHR33515:SF1">
    <property type="entry name" value="RIBOSOME-BINDING FACTOR A, CHLOROPLASTIC-RELATED"/>
    <property type="match status" value="1"/>
</dbReference>
<dbReference type="Pfam" id="PF02033">
    <property type="entry name" value="RBFA"/>
    <property type="match status" value="1"/>
</dbReference>
<dbReference type="SUPFAM" id="SSF89919">
    <property type="entry name" value="Ribosome-binding factor A, RbfA"/>
    <property type="match status" value="1"/>
</dbReference>
<reference key="1">
    <citation type="submission" date="2008-05" db="EMBL/GenBank/DDBJ databases">
        <title>Complete genome sequence of Clostridium botulinum E3 str. Alaska E43.</title>
        <authorList>
            <person name="Brinkac L.M."/>
            <person name="Brown J.L."/>
            <person name="Bruce D."/>
            <person name="Detter C."/>
            <person name="Munk C."/>
            <person name="Smith L.A."/>
            <person name="Smith T.J."/>
            <person name="Sutton G."/>
            <person name="Brettin T.S."/>
        </authorList>
    </citation>
    <scope>NUCLEOTIDE SEQUENCE [LARGE SCALE GENOMIC DNA]</scope>
    <source>
        <strain>Alaska E43 / Type E3</strain>
    </source>
</reference>
<organism>
    <name type="scientific">Clostridium botulinum (strain Alaska E43 / Type E3)</name>
    <dbReference type="NCBI Taxonomy" id="508767"/>
    <lineage>
        <taxon>Bacteria</taxon>
        <taxon>Bacillati</taxon>
        <taxon>Bacillota</taxon>
        <taxon>Clostridia</taxon>
        <taxon>Eubacteriales</taxon>
        <taxon>Clostridiaceae</taxon>
        <taxon>Clostridium</taxon>
    </lineage>
</organism>
<keyword id="KW-0963">Cytoplasm</keyword>
<keyword id="KW-0690">Ribosome biogenesis</keyword>
<protein>
    <recommendedName>
        <fullName evidence="1">Ribosome-binding factor A</fullName>
    </recommendedName>
</protein>
<gene>
    <name evidence="1" type="primary">rbfA</name>
    <name type="ordered locus">CLH_1225</name>
</gene>
<sequence>MPNYRGGRINEEFKREISNIIQNEIKDPRLTAMISVTDVKVTKDLRYAKVYVSIFSTKEEEKKDNFTALKSASGFIRKILGQRINVRHNPEILFELDDSINYAMHIDELIQKVKDK</sequence>
<name>RBFA_CLOBA</name>